<protein>
    <recommendedName>
        <fullName evidence="1">Iron-binding protein IscA</fullName>
    </recommendedName>
    <alternativeName>
        <fullName evidence="1">Iron-sulfur cluster assembly protein</fullName>
    </alternativeName>
</protein>
<dbReference type="EMBL" id="CP000036">
    <property type="protein sequence ID" value="ABB67096.1"/>
    <property type="molecule type" value="Genomic_DNA"/>
</dbReference>
<dbReference type="RefSeq" id="WP_000028953.1">
    <property type="nucleotide sequence ID" value="NC_007613.1"/>
</dbReference>
<dbReference type="SMR" id="Q31XW2"/>
<dbReference type="GeneID" id="93774608"/>
<dbReference type="KEGG" id="sbo:SBO_2552"/>
<dbReference type="HOGENOM" id="CLU_069054_5_1_6"/>
<dbReference type="Proteomes" id="UP000007067">
    <property type="component" value="Chromosome"/>
</dbReference>
<dbReference type="GO" id="GO:0005829">
    <property type="term" value="C:cytosol"/>
    <property type="evidence" value="ECO:0007669"/>
    <property type="project" value="TreeGrafter"/>
</dbReference>
<dbReference type="GO" id="GO:0051537">
    <property type="term" value="F:2 iron, 2 sulfur cluster binding"/>
    <property type="evidence" value="ECO:0007669"/>
    <property type="project" value="UniProtKB-ARBA"/>
</dbReference>
<dbReference type="GO" id="GO:0005506">
    <property type="term" value="F:iron ion binding"/>
    <property type="evidence" value="ECO:0007669"/>
    <property type="project" value="UniProtKB-UniRule"/>
</dbReference>
<dbReference type="GO" id="GO:0016226">
    <property type="term" value="P:iron-sulfur cluster assembly"/>
    <property type="evidence" value="ECO:0007669"/>
    <property type="project" value="UniProtKB-UniRule"/>
</dbReference>
<dbReference type="FunFam" id="2.60.300.12:FF:000001">
    <property type="entry name" value="Iron-binding protein IscA"/>
    <property type="match status" value="1"/>
</dbReference>
<dbReference type="Gene3D" id="2.60.300.12">
    <property type="entry name" value="HesB-like domain"/>
    <property type="match status" value="1"/>
</dbReference>
<dbReference type="HAMAP" id="MF_01429">
    <property type="entry name" value="Fe_S_insert_IscA"/>
    <property type="match status" value="1"/>
</dbReference>
<dbReference type="InterPro" id="IPR050322">
    <property type="entry name" value="Fe-S_cluster_asmbl/transfer"/>
</dbReference>
<dbReference type="InterPro" id="IPR000361">
    <property type="entry name" value="FeS_biogenesis"/>
</dbReference>
<dbReference type="InterPro" id="IPR016092">
    <property type="entry name" value="FeS_cluster_insertion"/>
</dbReference>
<dbReference type="InterPro" id="IPR017870">
    <property type="entry name" value="FeS_cluster_insertion_CS"/>
</dbReference>
<dbReference type="InterPro" id="IPR035903">
    <property type="entry name" value="HesB-like_dom_sf"/>
</dbReference>
<dbReference type="InterPro" id="IPR011302">
    <property type="entry name" value="IscA_proteobacteria"/>
</dbReference>
<dbReference type="NCBIfam" id="TIGR00049">
    <property type="entry name" value="iron-sulfur cluster assembly accessory protein"/>
    <property type="match status" value="1"/>
</dbReference>
<dbReference type="NCBIfam" id="TIGR02011">
    <property type="entry name" value="IscA"/>
    <property type="match status" value="1"/>
</dbReference>
<dbReference type="NCBIfam" id="NF007049">
    <property type="entry name" value="PRK09502.1"/>
    <property type="match status" value="1"/>
</dbReference>
<dbReference type="PANTHER" id="PTHR10072:SF41">
    <property type="entry name" value="IRON-SULFUR CLUSTER ASSEMBLY 1 HOMOLOG, MITOCHONDRIAL"/>
    <property type="match status" value="1"/>
</dbReference>
<dbReference type="PANTHER" id="PTHR10072">
    <property type="entry name" value="IRON-SULFUR CLUSTER ASSEMBLY PROTEIN"/>
    <property type="match status" value="1"/>
</dbReference>
<dbReference type="Pfam" id="PF01521">
    <property type="entry name" value="Fe-S_biosyn"/>
    <property type="match status" value="1"/>
</dbReference>
<dbReference type="SUPFAM" id="SSF89360">
    <property type="entry name" value="HesB-like domain"/>
    <property type="match status" value="1"/>
</dbReference>
<dbReference type="PROSITE" id="PS01152">
    <property type="entry name" value="HESB"/>
    <property type="match status" value="1"/>
</dbReference>
<organism>
    <name type="scientific">Shigella boydii serotype 4 (strain Sb227)</name>
    <dbReference type="NCBI Taxonomy" id="300268"/>
    <lineage>
        <taxon>Bacteria</taxon>
        <taxon>Pseudomonadati</taxon>
        <taxon>Pseudomonadota</taxon>
        <taxon>Gammaproteobacteria</taxon>
        <taxon>Enterobacterales</taxon>
        <taxon>Enterobacteriaceae</taxon>
        <taxon>Shigella</taxon>
    </lineage>
</organism>
<evidence type="ECO:0000255" key="1">
    <source>
        <dbReference type="HAMAP-Rule" id="MF_01429"/>
    </source>
</evidence>
<comment type="function">
    <text evidence="1">Is able to transfer iron-sulfur clusters to apo-ferredoxin. Multiple cycles of [2Fe2S] cluster formation and transfer are observed, suggesting that IscA acts catalytically. Recruits intracellular free iron so as to provide iron for the assembly of transient iron-sulfur cluster in IscU in the presence of IscS, L-cysteine and the thioredoxin reductase system TrxA/TrxB.</text>
</comment>
<comment type="cofactor">
    <cofactor evidence="1">
        <name>Fe cation</name>
        <dbReference type="ChEBI" id="CHEBI:24875"/>
    </cofactor>
    <text evidence="1">Binds 2 iron ions per dimer. The dimer may bind additional iron ions.</text>
</comment>
<comment type="subunit">
    <text evidence="1">Homodimer; may form tetramers and higher multimers.</text>
</comment>
<comment type="similarity">
    <text evidence="1">Belongs to the HesB/IscA family.</text>
</comment>
<feature type="chain" id="PRO_1000024376" description="Iron-binding protein IscA">
    <location>
        <begin position="1"/>
        <end position="107"/>
    </location>
</feature>
<feature type="binding site" evidence="1">
    <location>
        <position position="35"/>
    </location>
    <ligand>
        <name>Fe cation</name>
        <dbReference type="ChEBI" id="CHEBI:24875"/>
    </ligand>
</feature>
<feature type="binding site" evidence="1">
    <location>
        <position position="99"/>
    </location>
    <ligand>
        <name>Fe cation</name>
        <dbReference type="ChEBI" id="CHEBI:24875"/>
    </ligand>
</feature>
<feature type="binding site" evidence="1">
    <location>
        <position position="101"/>
    </location>
    <ligand>
        <name>Fe cation</name>
        <dbReference type="ChEBI" id="CHEBI:24875"/>
    </ligand>
</feature>
<accession>Q31XW2</accession>
<name>ISCA_SHIBS</name>
<reference key="1">
    <citation type="journal article" date="2005" name="Nucleic Acids Res.">
        <title>Genome dynamics and diversity of Shigella species, the etiologic agents of bacillary dysentery.</title>
        <authorList>
            <person name="Yang F."/>
            <person name="Yang J."/>
            <person name="Zhang X."/>
            <person name="Chen L."/>
            <person name="Jiang Y."/>
            <person name="Yan Y."/>
            <person name="Tang X."/>
            <person name="Wang J."/>
            <person name="Xiong Z."/>
            <person name="Dong J."/>
            <person name="Xue Y."/>
            <person name="Zhu Y."/>
            <person name="Xu X."/>
            <person name="Sun L."/>
            <person name="Chen S."/>
            <person name="Nie H."/>
            <person name="Peng J."/>
            <person name="Xu J."/>
            <person name="Wang Y."/>
            <person name="Yuan Z."/>
            <person name="Wen Y."/>
            <person name="Yao Z."/>
            <person name="Shen Y."/>
            <person name="Qiang B."/>
            <person name="Hou Y."/>
            <person name="Yu J."/>
            <person name="Jin Q."/>
        </authorList>
    </citation>
    <scope>NUCLEOTIDE SEQUENCE [LARGE SCALE GENOMIC DNA]</scope>
    <source>
        <strain>Sb227</strain>
    </source>
</reference>
<proteinExistence type="inferred from homology"/>
<keyword id="KW-0408">Iron</keyword>
<keyword id="KW-0479">Metal-binding</keyword>
<sequence length="107" mass="11556">MSITLSDSAAARVNTFLANRGKGFGLRLGVRTSGCSGMAYVLEFVDEPTPEDIVFEDKGVKVVVDGKSLQFLDGTQLDFVKEGLNEGFKFTNPNVKDECGCGESFHV</sequence>
<gene>
    <name evidence="1" type="primary">iscA</name>
    <name type="ordered locus">SBO_2552</name>
</gene>